<sequence>MEGTGLLTAVLVFLFAAVVAVPIAQRLGIGAVLGYLIAGIAIGPWGLGFIRDVDEILHFSELGVVFLMFIIGLELNPAKLWQLRRSIFGVGAGQVVITAAVLGALLYFTQFAWQAAVIGGVGLAMSSTAMALQLMREKGMNRNEGGQLGFSVLLFQDMAVIPALALIPILAGNEGGANDWVKIGLKIAAFAGMLIGGRYLLRPLFRYIVASGVREVFTAAALLVVLGSALFMDALGLSMALGTFIAGILLAESEFQHELEIAIEPFKGLLLGLFFISVGMALDLGVLFTHLLDVLLGVLALVFIKSAILYGLARVFGLRRSVRLQFAGVLSQGGEFAFVLFSAAFSQRVLNAEQLALLLVVVTLSMMTTPLLMQVIDRILVRRYNAQEESDEKPFVEDNDPQVIIVGFGRFGQVIGRLLMANKMRITVLERDVSAVSMMRKYGYKVYYGDATELELLRAAGAEKAKAIVITCNEPEDTMALVHLCQQHFPNLHILARARGRVEAHELLQNGVKDFTRETFSSALELGRKTLLELGMHPHQAYRAQQHFRRLDMRMLRELMPQHHGDVAQISRIKEARRELEDIFQREMLHESRQLDGWDEYE</sequence>
<name>KEFB_YERPN</name>
<evidence type="ECO:0000255" key="1">
    <source>
        <dbReference type="HAMAP-Rule" id="MF_01412"/>
    </source>
</evidence>
<evidence type="ECO:0000255" key="2">
    <source>
        <dbReference type="PROSITE-ProRule" id="PRU00543"/>
    </source>
</evidence>
<organism>
    <name type="scientific">Yersinia pestis bv. Antiqua (strain Nepal516)</name>
    <dbReference type="NCBI Taxonomy" id="377628"/>
    <lineage>
        <taxon>Bacteria</taxon>
        <taxon>Pseudomonadati</taxon>
        <taxon>Pseudomonadota</taxon>
        <taxon>Gammaproteobacteria</taxon>
        <taxon>Enterobacterales</taxon>
        <taxon>Yersiniaceae</taxon>
        <taxon>Yersinia</taxon>
    </lineage>
</organism>
<reference key="1">
    <citation type="journal article" date="2006" name="J. Bacteriol.">
        <title>Complete genome sequence of Yersinia pestis strains Antiqua and Nepal516: evidence of gene reduction in an emerging pathogen.</title>
        <authorList>
            <person name="Chain P.S.G."/>
            <person name="Hu P."/>
            <person name="Malfatti S.A."/>
            <person name="Radnedge L."/>
            <person name="Larimer F."/>
            <person name="Vergez L.M."/>
            <person name="Worsham P."/>
            <person name="Chu M.C."/>
            <person name="Andersen G.L."/>
        </authorList>
    </citation>
    <scope>NUCLEOTIDE SEQUENCE [LARGE SCALE GENOMIC DNA]</scope>
    <source>
        <strain>Nepal516</strain>
    </source>
</reference>
<reference key="2">
    <citation type="submission" date="2009-04" db="EMBL/GenBank/DDBJ databases">
        <title>Yersinia pestis Nepal516A whole genome shotgun sequencing project.</title>
        <authorList>
            <person name="Plunkett G. III"/>
            <person name="Anderson B.D."/>
            <person name="Baumler D.J."/>
            <person name="Burland V."/>
            <person name="Cabot E.L."/>
            <person name="Glasner J.D."/>
            <person name="Mau B."/>
            <person name="Neeno-Eckwall E."/>
            <person name="Perna N.T."/>
            <person name="Munk A.C."/>
            <person name="Tapia R."/>
            <person name="Green L.D."/>
            <person name="Rogers Y.C."/>
            <person name="Detter J.C."/>
            <person name="Bruce D.C."/>
            <person name="Brettin T.S."/>
        </authorList>
    </citation>
    <scope>NUCLEOTIDE SEQUENCE [LARGE SCALE GENOMIC DNA]</scope>
    <source>
        <strain>Nepal516</strain>
    </source>
</reference>
<protein>
    <recommendedName>
        <fullName evidence="1">Glutathione-regulated potassium-efflux system protein KefB</fullName>
    </recommendedName>
    <alternativeName>
        <fullName evidence="1">K(+)/H(+) antiporter</fullName>
    </alternativeName>
</protein>
<keyword id="KW-0050">Antiport</keyword>
<keyword id="KW-0997">Cell inner membrane</keyword>
<keyword id="KW-1003">Cell membrane</keyword>
<keyword id="KW-0406">Ion transport</keyword>
<keyword id="KW-0472">Membrane</keyword>
<keyword id="KW-0630">Potassium</keyword>
<keyword id="KW-0633">Potassium transport</keyword>
<keyword id="KW-0812">Transmembrane</keyword>
<keyword id="KW-1133">Transmembrane helix</keyword>
<keyword id="KW-0813">Transport</keyword>
<accession>Q1CCS7</accession>
<accession>D1Q2N9</accession>
<feature type="chain" id="PRO_0000301536" description="Glutathione-regulated potassium-efflux system protein KefB">
    <location>
        <begin position="1"/>
        <end position="602"/>
    </location>
</feature>
<feature type="transmembrane region" description="Helical" evidence="1">
    <location>
        <begin position="4"/>
        <end position="24"/>
    </location>
</feature>
<feature type="transmembrane region" description="Helical" evidence="1">
    <location>
        <begin position="29"/>
        <end position="49"/>
    </location>
</feature>
<feature type="transmembrane region" description="Helical" evidence="1">
    <location>
        <begin position="55"/>
        <end position="75"/>
    </location>
</feature>
<feature type="transmembrane region" description="Helical" evidence="1">
    <location>
        <begin position="87"/>
        <end position="107"/>
    </location>
</feature>
<feature type="transmembrane region" description="Helical" evidence="1">
    <location>
        <begin position="115"/>
        <end position="135"/>
    </location>
</feature>
<feature type="transmembrane region" description="Helical" evidence="1">
    <location>
        <begin position="152"/>
        <end position="172"/>
    </location>
</feature>
<feature type="transmembrane region" description="Helical" evidence="1">
    <location>
        <begin position="181"/>
        <end position="201"/>
    </location>
</feature>
<feature type="transmembrane region" description="Helical" evidence="1">
    <location>
        <begin position="207"/>
        <end position="227"/>
    </location>
</feature>
<feature type="transmembrane region" description="Helical" evidence="1">
    <location>
        <begin position="230"/>
        <end position="250"/>
    </location>
</feature>
<feature type="transmembrane region" description="Helical" evidence="1">
    <location>
        <begin position="261"/>
        <end position="281"/>
    </location>
</feature>
<feature type="transmembrane region" description="Helical" evidence="1">
    <location>
        <begin position="296"/>
        <end position="318"/>
    </location>
</feature>
<feature type="transmembrane region" description="Helical" evidence="1">
    <location>
        <begin position="326"/>
        <end position="346"/>
    </location>
</feature>
<feature type="transmembrane region" description="Helical" evidence="1">
    <location>
        <begin position="356"/>
        <end position="376"/>
    </location>
</feature>
<feature type="domain" description="RCK N-terminal" evidence="2">
    <location>
        <begin position="400"/>
        <end position="519"/>
    </location>
</feature>
<proteinExistence type="inferred from homology"/>
<dbReference type="EMBL" id="CP000305">
    <property type="protein sequence ID" value="ABG20203.1"/>
    <property type="molecule type" value="Genomic_DNA"/>
</dbReference>
<dbReference type="EMBL" id="ACNQ01000019">
    <property type="protein sequence ID" value="EEO74792.1"/>
    <property type="molecule type" value="Genomic_DNA"/>
</dbReference>
<dbReference type="RefSeq" id="WP_002212314.1">
    <property type="nucleotide sequence ID" value="NZ_ACNQ01000019.1"/>
</dbReference>
<dbReference type="SMR" id="Q1CCS7"/>
<dbReference type="GeneID" id="57974412"/>
<dbReference type="KEGG" id="ypn:YPN_3876"/>
<dbReference type="HOGENOM" id="CLU_005126_9_3_6"/>
<dbReference type="Proteomes" id="UP000008936">
    <property type="component" value="Chromosome"/>
</dbReference>
<dbReference type="GO" id="GO:0005886">
    <property type="term" value="C:plasma membrane"/>
    <property type="evidence" value="ECO:0007669"/>
    <property type="project" value="UniProtKB-SubCell"/>
</dbReference>
<dbReference type="GO" id="GO:0015503">
    <property type="term" value="F:glutathione-regulated potassium exporter activity"/>
    <property type="evidence" value="ECO:0007669"/>
    <property type="project" value="UniProtKB-UniRule"/>
</dbReference>
<dbReference type="GO" id="GO:1902600">
    <property type="term" value="P:proton transmembrane transport"/>
    <property type="evidence" value="ECO:0007669"/>
    <property type="project" value="InterPro"/>
</dbReference>
<dbReference type="FunFam" id="1.20.1530.20:FF:000001">
    <property type="entry name" value="Glutathione-regulated potassium-efflux system protein KefB"/>
    <property type="match status" value="1"/>
</dbReference>
<dbReference type="FunFam" id="3.40.50.720:FF:000036">
    <property type="entry name" value="Glutathione-regulated potassium-efflux system protein KefB"/>
    <property type="match status" value="1"/>
</dbReference>
<dbReference type="Gene3D" id="1.20.1530.20">
    <property type="match status" value="1"/>
</dbReference>
<dbReference type="Gene3D" id="3.40.50.720">
    <property type="entry name" value="NAD(P)-binding Rossmann-like Domain"/>
    <property type="match status" value="1"/>
</dbReference>
<dbReference type="HAMAP" id="MF_01412">
    <property type="entry name" value="K_H_efflux_KefB"/>
    <property type="match status" value="1"/>
</dbReference>
<dbReference type="InterPro" id="IPR006153">
    <property type="entry name" value="Cation/H_exchanger_TM"/>
</dbReference>
<dbReference type="InterPro" id="IPR004771">
    <property type="entry name" value="K/H_exchanger"/>
</dbReference>
<dbReference type="InterPro" id="IPR020884">
    <property type="entry name" value="K_H_efflux_KefB"/>
</dbReference>
<dbReference type="InterPro" id="IPR038770">
    <property type="entry name" value="Na+/solute_symporter_sf"/>
</dbReference>
<dbReference type="InterPro" id="IPR036291">
    <property type="entry name" value="NAD(P)-bd_dom_sf"/>
</dbReference>
<dbReference type="InterPro" id="IPR003148">
    <property type="entry name" value="RCK_N"/>
</dbReference>
<dbReference type="NCBIfam" id="TIGR00932">
    <property type="entry name" value="2a37"/>
    <property type="match status" value="1"/>
</dbReference>
<dbReference type="NCBIfam" id="NF002973">
    <property type="entry name" value="PRK03659.1"/>
    <property type="match status" value="1"/>
</dbReference>
<dbReference type="PANTHER" id="PTHR46157">
    <property type="entry name" value="K(+) EFFLUX ANTIPORTER 3, CHLOROPLASTIC"/>
    <property type="match status" value="1"/>
</dbReference>
<dbReference type="PANTHER" id="PTHR46157:SF4">
    <property type="entry name" value="K(+) EFFLUX ANTIPORTER 3, CHLOROPLASTIC"/>
    <property type="match status" value="1"/>
</dbReference>
<dbReference type="Pfam" id="PF00999">
    <property type="entry name" value="Na_H_Exchanger"/>
    <property type="match status" value="1"/>
</dbReference>
<dbReference type="Pfam" id="PF02254">
    <property type="entry name" value="TrkA_N"/>
    <property type="match status" value="1"/>
</dbReference>
<dbReference type="SUPFAM" id="SSF51735">
    <property type="entry name" value="NAD(P)-binding Rossmann-fold domains"/>
    <property type="match status" value="1"/>
</dbReference>
<dbReference type="PROSITE" id="PS51201">
    <property type="entry name" value="RCK_N"/>
    <property type="match status" value="1"/>
</dbReference>
<comment type="function">
    <text evidence="1">Pore-forming subunit of a potassium efflux system that confers protection against electrophiles. Catalyzes K(+)/H(+) antiport.</text>
</comment>
<comment type="subunit">
    <text evidence="1">Interacts with the regulatory subunit KefG.</text>
</comment>
<comment type="subcellular location">
    <subcellularLocation>
        <location evidence="1">Cell inner membrane</location>
        <topology evidence="1">Multi-pass membrane protein</topology>
    </subcellularLocation>
</comment>
<comment type="similarity">
    <text evidence="1">Belongs to the monovalent cation:proton antiporter 2 (CPA2) transporter (TC 2.A.37) family. KefB subfamily.</text>
</comment>
<gene>
    <name evidence="1" type="primary">kefB</name>
    <name type="ordered locus">YPN_3876</name>
    <name type="ORF">YP516_4402</name>
</gene>